<dbReference type="EC" id="5.3.3.2" evidence="1"/>
<dbReference type="EMBL" id="CP000607">
    <property type="protein sequence ID" value="ABP37555.1"/>
    <property type="molecule type" value="Genomic_DNA"/>
</dbReference>
<dbReference type="SMR" id="A4SGE6"/>
<dbReference type="STRING" id="290318.Cvib_1545"/>
<dbReference type="KEGG" id="pvi:Cvib_1545"/>
<dbReference type="eggNOG" id="COG1304">
    <property type="taxonomic scope" value="Bacteria"/>
</dbReference>
<dbReference type="HOGENOM" id="CLU_065515_1_0_10"/>
<dbReference type="OrthoDB" id="9795032at2"/>
<dbReference type="GO" id="GO:0005737">
    <property type="term" value="C:cytoplasm"/>
    <property type="evidence" value="ECO:0007669"/>
    <property type="project" value="UniProtKB-SubCell"/>
</dbReference>
<dbReference type="GO" id="GO:0010181">
    <property type="term" value="F:FMN binding"/>
    <property type="evidence" value="ECO:0007669"/>
    <property type="project" value="UniProtKB-UniRule"/>
</dbReference>
<dbReference type="GO" id="GO:0004452">
    <property type="term" value="F:isopentenyl-diphosphate delta-isomerase activity"/>
    <property type="evidence" value="ECO:0007669"/>
    <property type="project" value="UniProtKB-UniRule"/>
</dbReference>
<dbReference type="GO" id="GO:0000287">
    <property type="term" value="F:magnesium ion binding"/>
    <property type="evidence" value="ECO:0007669"/>
    <property type="project" value="UniProtKB-UniRule"/>
</dbReference>
<dbReference type="GO" id="GO:0070402">
    <property type="term" value="F:NADPH binding"/>
    <property type="evidence" value="ECO:0007669"/>
    <property type="project" value="UniProtKB-UniRule"/>
</dbReference>
<dbReference type="GO" id="GO:0016491">
    <property type="term" value="F:oxidoreductase activity"/>
    <property type="evidence" value="ECO:0007669"/>
    <property type="project" value="InterPro"/>
</dbReference>
<dbReference type="GO" id="GO:0008299">
    <property type="term" value="P:isoprenoid biosynthetic process"/>
    <property type="evidence" value="ECO:0007669"/>
    <property type="project" value="UniProtKB-UniRule"/>
</dbReference>
<dbReference type="CDD" id="cd02811">
    <property type="entry name" value="IDI-2_FMN"/>
    <property type="match status" value="1"/>
</dbReference>
<dbReference type="Gene3D" id="3.20.20.70">
    <property type="entry name" value="Aldolase class I"/>
    <property type="match status" value="1"/>
</dbReference>
<dbReference type="HAMAP" id="MF_00354">
    <property type="entry name" value="Idi_2"/>
    <property type="match status" value="1"/>
</dbReference>
<dbReference type="InterPro" id="IPR013785">
    <property type="entry name" value="Aldolase_TIM"/>
</dbReference>
<dbReference type="InterPro" id="IPR000262">
    <property type="entry name" value="FMN-dep_DH"/>
</dbReference>
<dbReference type="InterPro" id="IPR011179">
    <property type="entry name" value="IPdP_isomerase"/>
</dbReference>
<dbReference type="NCBIfam" id="TIGR02151">
    <property type="entry name" value="IPP_isom_2"/>
    <property type="match status" value="1"/>
</dbReference>
<dbReference type="PANTHER" id="PTHR43665">
    <property type="entry name" value="ISOPENTENYL-DIPHOSPHATE DELTA-ISOMERASE"/>
    <property type="match status" value="1"/>
</dbReference>
<dbReference type="PANTHER" id="PTHR43665:SF1">
    <property type="entry name" value="ISOPENTENYL-DIPHOSPHATE DELTA-ISOMERASE"/>
    <property type="match status" value="1"/>
</dbReference>
<dbReference type="Pfam" id="PF01070">
    <property type="entry name" value="FMN_dh"/>
    <property type="match status" value="2"/>
</dbReference>
<dbReference type="PIRSF" id="PIRSF003314">
    <property type="entry name" value="IPP_isomerase"/>
    <property type="match status" value="1"/>
</dbReference>
<dbReference type="SMART" id="SM01240">
    <property type="entry name" value="IMPDH"/>
    <property type="match status" value="1"/>
</dbReference>
<dbReference type="SUPFAM" id="SSF51395">
    <property type="entry name" value="FMN-linked oxidoreductases"/>
    <property type="match status" value="1"/>
</dbReference>
<name>IDI2_CHLPM</name>
<gene>
    <name evidence="1" type="primary">fni</name>
    <name type="ordered locus">Cvib_1545</name>
</gene>
<accession>A4SGE6</accession>
<organism>
    <name type="scientific">Chlorobium phaeovibrioides (strain DSM 265 / 1930)</name>
    <name type="common">Prosthecochloris vibrioformis (strain DSM 265)</name>
    <dbReference type="NCBI Taxonomy" id="290318"/>
    <lineage>
        <taxon>Bacteria</taxon>
        <taxon>Pseudomonadati</taxon>
        <taxon>Chlorobiota</taxon>
        <taxon>Chlorobiia</taxon>
        <taxon>Chlorobiales</taxon>
        <taxon>Chlorobiaceae</taxon>
        <taxon>Chlorobium/Pelodictyon group</taxon>
        <taxon>Chlorobium</taxon>
    </lineage>
</organism>
<comment type="function">
    <text evidence="1">Involved in the biosynthesis of isoprenoids. Catalyzes the 1,3-allylic rearrangement of the homoallylic substrate isopentenyl (IPP) to its allylic isomer, dimethylallyl diphosphate (DMAPP).</text>
</comment>
<comment type="catalytic activity">
    <reaction evidence="1">
        <text>isopentenyl diphosphate = dimethylallyl diphosphate</text>
        <dbReference type="Rhea" id="RHEA:23284"/>
        <dbReference type="ChEBI" id="CHEBI:57623"/>
        <dbReference type="ChEBI" id="CHEBI:128769"/>
        <dbReference type="EC" id="5.3.3.2"/>
    </reaction>
</comment>
<comment type="cofactor">
    <cofactor evidence="1">
        <name>FMN</name>
        <dbReference type="ChEBI" id="CHEBI:58210"/>
    </cofactor>
</comment>
<comment type="cofactor">
    <cofactor evidence="1">
        <name>NADPH</name>
        <dbReference type="ChEBI" id="CHEBI:57783"/>
    </cofactor>
</comment>
<comment type="cofactor">
    <cofactor evidence="1">
        <name>Mg(2+)</name>
        <dbReference type="ChEBI" id="CHEBI:18420"/>
    </cofactor>
</comment>
<comment type="subunit">
    <text evidence="1">Homooctamer. Dimer of tetramers.</text>
</comment>
<comment type="subcellular location">
    <subcellularLocation>
        <location evidence="1">Cytoplasm</location>
    </subcellularLocation>
</comment>
<comment type="similarity">
    <text evidence="1">Belongs to the IPP isomerase type 2 family.</text>
</comment>
<reference key="1">
    <citation type="submission" date="2007-03" db="EMBL/GenBank/DDBJ databases">
        <title>Complete sequence of Prosthecochloris vibrioformis DSM 265.</title>
        <authorList>
            <consortium name="US DOE Joint Genome Institute"/>
            <person name="Copeland A."/>
            <person name="Lucas S."/>
            <person name="Lapidus A."/>
            <person name="Barry K."/>
            <person name="Detter J.C."/>
            <person name="Glavina del Rio T."/>
            <person name="Hammon N."/>
            <person name="Israni S."/>
            <person name="Pitluck S."/>
            <person name="Schmutz J."/>
            <person name="Larimer F."/>
            <person name="Land M."/>
            <person name="Hauser L."/>
            <person name="Mikhailova N."/>
            <person name="Li T."/>
            <person name="Overmann J."/>
            <person name="Schuster S.C."/>
            <person name="Bryant D.A."/>
            <person name="Richardson P."/>
        </authorList>
    </citation>
    <scope>NUCLEOTIDE SEQUENCE [LARGE SCALE GENOMIC DNA]</scope>
    <source>
        <strain>DSM 265 / 1930</strain>
    </source>
</reference>
<sequence length="355" mass="38114">MSTTITNSTAERKHSHVDICLRGDVAFSTITTGLERYRLRHNALPELNYDNLSTETDFLGKRIGAPLMISSMTGGYSEAAELNGKLAEAAERFQLPLGVGSMRQALEESSHRDSFAVVRRHAPTTQIFANIGAPEIAKGLSSDDLQTMIEMIRADGLIIHLNAAQELFQPEGGTDFRRVLDEVAAITAKLSVPVIAKEVGCGISAPVARQLLNAGVRVIDVAGAGGISWQKVEEARYTRRFGTDDRFSTRGLEELLNWGTPTAECLVAVNALRENPTPPFSLIASGGIQSGIDIAKSIALGADLAASAGALLRSLHSGTLEETLTTWMNDLRAAMFLTGSATIAELQNNRPISKQ</sequence>
<evidence type="ECO:0000255" key="1">
    <source>
        <dbReference type="HAMAP-Rule" id="MF_00354"/>
    </source>
</evidence>
<proteinExistence type="inferred from homology"/>
<feature type="chain" id="PRO_1000079381" description="Isopentenyl-diphosphate delta-isomerase">
    <location>
        <begin position="1"/>
        <end position="355"/>
    </location>
</feature>
<feature type="binding site" evidence="1">
    <location>
        <begin position="12"/>
        <end position="13"/>
    </location>
    <ligand>
        <name>substrate</name>
    </ligand>
</feature>
<feature type="binding site" evidence="1">
    <location>
        <position position="70"/>
    </location>
    <ligand>
        <name>FMN</name>
        <dbReference type="ChEBI" id="CHEBI:58210"/>
    </ligand>
</feature>
<feature type="binding site" evidence="1">
    <location>
        <begin position="71"/>
        <end position="73"/>
    </location>
    <ligand>
        <name>FMN</name>
        <dbReference type="ChEBI" id="CHEBI:58210"/>
    </ligand>
</feature>
<feature type="binding site" evidence="1">
    <location>
        <begin position="101"/>
        <end position="103"/>
    </location>
    <ligand>
        <name>substrate</name>
    </ligand>
</feature>
<feature type="binding site" evidence="1">
    <location>
        <position position="101"/>
    </location>
    <ligand>
        <name>FMN</name>
        <dbReference type="ChEBI" id="CHEBI:58210"/>
    </ligand>
</feature>
<feature type="binding site" evidence="1">
    <location>
        <position position="130"/>
    </location>
    <ligand>
        <name>FMN</name>
        <dbReference type="ChEBI" id="CHEBI:58210"/>
    </ligand>
</feature>
<feature type="binding site" evidence="1">
    <location>
        <position position="165"/>
    </location>
    <ligand>
        <name>substrate</name>
    </ligand>
</feature>
<feature type="binding site" evidence="1">
    <location>
        <position position="166"/>
    </location>
    <ligand>
        <name>Mg(2+)</name>
        <dbReference type="ChEBI" id="CHEBI:18420"/>
    </ligand>
</feature>
<feature type="binding site" evidence="1">
    <location>
        <position position="197"/>
    </location>
    <ligand>
        <name>FMN</name>
        <dbReference type="ChEBI" id="CHEBI:58210"/>
    </ligand>
</feature>
<feature type="binding site" evidence="1">
    <location>
        <begin position="308"/>
        <end position="309"/>
    </location>
    <ligand>
        <name>FMN</name>
        <dbReference type="ChEBI" id="CHEBI:58210"/>
    </ligand>
</feature>
<keyword id="KW-0963">Cytoplasm</keyword>
<keyword id="KW-0285">Flavoprotein</keyword>
<keyword id="KW-0288">FMN</keyword>
<keyword id="KW-0413">Isomerase</keyword>
<keyword id="KW-0414">Isoprene biosynthesis</keyword>
<keyword id="KW-0460">Magnesium</keyword>
<keyword id="KW-0479">Metal-binding</keyword>
<keyword id="KW-0521">NADP</keyword>
<protein>
    <recommendedName>
        <fullName evidence="1">Isopentenyl-diphosphate delta-isomerase</fullName>
        <shortName evidence="1">IPP isomerase</shortName>
        <ecNumber evidence="1">5.3.3.2</ecNumber>
    </recommendedName>
    <alternativeName>
        <fullName evidence="1">Isopentenyl diphosphate:dimethylallyl diphosphate isomerase</fullName>
    </alternativeName>
    <alternativeName>
        <fullName evidence="1">Isopentenyl pyrophosphate isomerase</fullName>
    </alternativeName>
    <alternativeName>
        <fullName evidence="1">Type 2 isopentenyl diphosphate isomerase</fullName>
        <shortName evidence="1">IDI-2</shortName>
    </alternativeName>
</protein>